<reference key="1">
    <citation type="journal article" date="2002" name="J. Bacteriol.">
        <title>Whole-genome comparison of Mycobacterium tuberculosis clinical and laboratory strains.</title>
        <authorList>
            <person name="Fleischmann R.D."/>
            <person name="Alland D."/>
            <person name="Eisen J.A."/>
            <person name="Carpenter L."/>
            <person name="White O."/>
            <person name="Peterson J.D."/>
            <person name="DeBoy R.T."/>
            <person name="Dodson R.J."/>
            <person name="Gwinn M.L."/>
            <person name="Haft D.H."/>
            <person name="Hickey E.K."/>
            <person name="Kolonay J.F."/>
            <person name="Nelson W.C."/>
            <person name="Umayam L.A."/>
            <person name="Ermolaeva M.D."/>
            <person name="Salzberg S.L."/>
            <person name="Delcher A."/>
            <person name="Utterback T.R."/>
            <person name="Weidman J.F."/>
            <person name="Khouri H.M."/>
            <person name="Gill J."/>
            <person name="Mikula A."/>
            <person name="Bishai W."/>
            <person name="Jacobs W.R. Jr."/>
            <person name="Venter J.C."/>
            <person name="Fraser C.M."/>
        </authorList>
    </citation>
    <scope>NUCLEOTIDE SEQUENCE [LARGE SCALE GENOMIC DNA]</scope>
    <source>
        <strain>CDC 1551 / Oshkosh</strain>
    </source>
</reference>
<keyword id="KW-0004">4Fe-4S</keyword>
<keyword id="KW-0028">Amino-acid biosynthesis</keyword>
<keyword id="KW-0314">Glutamate biosynthesis</keyword>
<keyword id="KW-0408">Iron</keyword>
<keyword id="KW-0411">Iron-sulfur</keyword>
<keyword id="KW-0479">Metal-binding</keyword>
<keyword id="KW-0521">NADP</keyword>
<keyword id="KW-0560">Oxidoreductase</keyword>
<keyword id="KW-1185">Reference proteome</keyword>
<sequence length="488" mass="53452">MADPGGFLKYTHRKLPKRRPVPLRLRDWREVYEEFDNESLRQQATRCMDCGIPFCHNGCPLGNLIPEWNDLVRRGRWRDAIERLHATNNFPDFTGRLCPAPCEPACVLGINQDPVTIKQIELEIIDKAFDEGWVQPRPPRKLTGQTVAVVGSGPAGLAAAQQLTRAGHTVTVFEREDRIGGLLRYGIPEFKMEKRHLDRRLDQMRSEGTEFRPGVNVGVDISAEKLRADFDAVVLAGGATAWRELPIPGRELEGVHQAMEFLPWANRVQEGDDVLDEDGQPPITAKGKKVVIIGGGDTGADCLGTVHRQGAIAVHQFEIMPRPPDARAESTPWPTYPLMYRVSAAHEEGGERVFSVNTEAFVGTDGRVSALRAHEVTMLDGKFVKVEGSDFELEADLVLLAMGFVGPERAGLLTDLGVKFTERGNVARGDDFDTSVPGVFVAGDMGRGQSLIVWAIAEGRAAAAAVDRYLMGSSALPAPVKPTAAPLQ</sequence>
<comment type="catalytic activity">
    <reaction>
        <text>2 L-glutamate + NADP(+) = L-glutamine + 2-oxoglutarate + NADPH + H(+)</text>
        <dbReference type="Rhea" id="RHEA:15501"/>
        <dbReference type="ChEBI" id="CHEBI:15378"/>
        <dbReference type="ChEBI" id="CHEBI:16810"/>
        <dbReference type="ChEBI" id="CHEBI:29985"/>
        <dbReference type="ChEBI" id="CHEBI:57783"/>
        <dbReference type="ChEBI" id="CHEBI:58349"/>
        <dbReference type="ChEBI" id="CHEBI:58359"/>
        <dbReference type="EC" id="1.4.1.13"/>
    </reaction>
</comment>
<comment type="cofactor">
    <cofactor evidence="1">
        <name>[4Fe-4S] cluster</name>
        <dbReference type="ChEBI" id="CHEBI:49883"/>
    </cofactor>
    <text evidence="1">Binds 1 [4Fe-4S] cluster.</text>
</comment>
<comment type="pathway">
    <text>Amino-acid biosynthesis; L-glutamate biosynthesis via GLT pathway; L-glutamate from 2-oxoglutarate and L-glutamine (NADP(+) route): step 1/1.</text>
</comment>
<accession>P9WN18</accession>
<accession>F2GDM0</accession>
<accession>L0TFG6</accession>
<accession>P96219</accession>
<accession>Q7D4Q4</accession>
<evidence type="ECO:0000250" key="1"/>
<gene>
    <name type="primary">gltD</name>
    <name type="ordered locus">MT3973</name>
</gene>
<name>GLTD_MYCTO</name>
<protein>
    <recommendedName>
        <fullName>Glutamate synthase [NADPH] small chain</fullName>
        <ecNumber>1.4.1.13</ecNumber>
    </recommendedName>
    <alternativeName>
        <fullName>Glutamate synthase subunit beta</fullName>
        <shortName>GLTS beta chain</shortName>
    </alternativeName>
</protein>
<organism>
    <name type="scientific">Mycobacterium tuberculosis (strain CDC 1551 / Oshkosh)</name>
    <dbReference type="NCBI Taxonomy" id="83331"/>
    <lineage>
        <taxon>Bacteria</taxon>
        <taxon>Bacillati</taxon>
        <taxon>Actinomycetota</taxon>
        <taxon>Actinomycetes</taxon>
        <taxon>Mycobacteriales</taxon>
        <taxon>Mycobacteriaceae</taxon>
        <taxon>Mycobacterium</taxon>
        <taxon>Mycobacterium tuberculosis complex</taxon>
    </lineage>
</organism>
<feature type="chain" id="PRO_0000427204" description="Glutamate synthase [NADPH] small chain">
    <location>
        <begin position="1"/>
        <end position="488"/>
    </location>
</feature>
<feature type="domain" description="4Fe-4S ferredoxin-type">
    <location>
        <begin position="38"/>
        <end position="69"/>
    </location>
</feature>
<proteinExistence type="inferred from homology"/>
<dbReference type="EC" id="1.4.1.13"/>
<dbReference type="EMBL" id="AE000516">
    <property type="protein sequence ID" value="AAK48341.1"/>
    <property type="molecule type" value="Genomic_DNA"/>
</dbReference>
<dbReference type="PIR" id="G70655">
    <property type="entry name" value="G70655"/>
</dbReference>
<dbReference type="RefSeq" id="WP_003899732.1">
    <property type="nucleotide sequence ID" value="NZ_KK341227.1"/>
</dbReference>
<dbReference type="SMR" id="P9WN18"/>
<dbReference type="KEGG" id="mtc:MT3973"/>
<dbReference type="PATRIC" id="fig|83331.31.peg.4273"/>
<dbReference type="HOGENOM" id="CLU_000422_3_1_11"/>
<dbReference type="UniPathway" id="UPA00634">
    <property type="reaction ID" value="UER00689"/>
</dbReference>
<dbReference type="Proteomes" id="UP000001020">
    <property type="component" value="Chromosome"/>
</dbReference>
<dbReference type="GO" id="GO:0051539">
    <property type="term" value="F:4 iron, 4 sulfur cluster binding"/>
    <property type="evidence" value="ECO:0007669"/>
    <property type="project" value="UniProtKB-KW"/>
</dbReference>
<dbReference type="GO" id="GO:0004355">
    <property type="term" value="F:glutamate synthase (NADPH) activity"/>
    <property type="evidence" value="ECO:0007669"/>
    <property type="project" value="UniProtKB-EC"/>
</dbReference>
<dbReference type="GO" id="GO:0046872">
    <property type="term" value="F:metal ion binding"/>
    <property type="evidence" value="ECO:0007669"/>
    <property type="project" value="UniProtKB-KW"/>
</dbReference>
<dbReference type="GO" id="GO:0016639">
    <property type="term" value="F:oxidoreductase activity, acting on the CH-NH2 group of donors, NAD or NADP as acceptor"/>
    <property type="evidence" value="ECO:0007669"/>
    <property type="project" value="InterPro"/>
</dbReference>
<dbReference type="GO" id="GO:0097054">
    <property type="term" value="P:L-glutamate biosynthetic process"/>
    <property type="evidence" value="ECO:0007669"/>
    <property type="project" value="UniProtKB-UniPathway"/>
</dbReference>
<dbReference type="FunFam" id="3.50.50.60:FF:000068">
    <property type="entry name" value="Glutamate synthase small subunit"/>
    <property type="match status" value="1"/>
</dbReference>
<dbReference type="FunFam" id="3.50.50.60:FF:000124">
    <property type="entry name" value="Glutamate synthase small subunit"/>
    <property type="match status" value="1"/>
</dbReference>
<dbReference type="FunFam" id="1.10.1060.10:FF:000004">
    <property type="entry name" value="Glutamate synthase, small subunit"/>
    <property type="match status" value="1"/>
</dbReference>
<dbReference type="Gene3D" id="1.10.1060.10">
    <property type="entry name" value="Alpha-helical ferredoxin"/>
    <property type="match status" value="1"/>
</dbReference>
<dbReference type="Gene3D" id="3.50.50.60">
    <property type="entry name" value="FAD/NAD(P)-binding domain"/>
    <property type="match status" value="2"/>
</dbReference>
<dbReference type="InterPro" id="IPR028261">
    <property type="entry name" value="DPD_II"/>
</dbReference>
<dbReference type="InterPro" id="IPR036188">
    <property type="entry name" value="FAD/NAD-bd_sf"/>
</dbReference>
<dbReference type="InterPro" id="IPR023753">
    <property type="entry name" value="FAD/NAD-binding_dom"/>
</dbReference>
<dbReference type="InterPro" id="IPR006005">
    <property type="entry name" value="Glut_synth_ssu1"/>
</dbReference>
<dbReference type="InterPro" id="IPR051394">
    <property type="entry name" value="Glutamate_Synthase"/>
</dbReference>
<dbReference type="InterPro" id="IPR009051">
    <property type="entry name" value="Helical_ferredxn"/>
</dbReference>
<dbReference type="NCBIfam" id="TIGR01317">
    <property type="entry name" value="GOGAT_sm_gam"/>
    <property type="match status" value="1"/>
</dbReference>
<dbReference type="PANTHER" id="PTHR43100">
    <property type="entry name" value="GLUTAMATE SYNTHASE [NADPH] SMALL CHAIN"/>
    <property type="match status" value="1"/>
</dbReference>
<dbReference type="PANTHER" id="PTHR43100:SF1">
    <property type="entry name" value="GLUTAMATE SYNTHASE [NADPH] SMALL CHAIN"/>
    <property type="match status" value="1"/>
</dbReference>
<dbReference type="Pfam" id="PF14691">
    <property type="entry name" value="Fer4_20"/>
    <property type="match status" value="1"/>
</dbReference>
<dbReference type="Pfam" id="PF07992">
    <property type="entry name" value="Pyr_redox_2"/>
    <property type="match status" value="1"/>
</dbReference>
<dbReference type="PRINTS" id="PR00419">
    <property type="entry name" value="ADXRDTASE"/>
</dbReference>
<dbReference type="SUPFAM" id="SSF46548">
    <property type="entry name" value="alpha-helical ferredoxin"/>
    <property type="match status" value="1"/>
</dbReference>
<dbReference type="SUPFAM" id="SSF51971">
    <property type="entry name" value="Nucleotide-binding domain"/>
    <property type="match status" value="2"/>
</dbReference>